<sequence length="227" mass="25972">MNIKGSPWKGSLLLLLVSNLLLCQNVAPLPICPGGAARCQVTLRDLFDRAVVLSHYIHNLSSEMFSEFDKRYTHGRGFITRAINSCHTSSLPTPEDKEQAQQMNQKDFLSLIVSILRSWNEPLYHLVTEVRGMEEAPEAILSKAVEIEEQTKRLLEGMELIVSQVHPETKENEIYPVWTGLPSLQMADEESRLSAYYNLLHCLRRDSHKIDNYLKLLKCRIIHNNNC</sequence>
<evidence type="ECO:0000250" key="1"/>
<evidence type="ECO:0000250" key="2">
    <source>
        <dbReference type="UniProtKB" id="P01236"/>
    </source>
</evidence>
<evidence type="ECO:0000250" key="3">
    <source>
        <dbReference type="UniProtKB" id="P01239"/>
    </source>
</evidence>
<evidence type="ECO:0000255" key="4"/>
<evidence type="ECO:0000305" key="5"/>
<accession>P55151</accession>
<reference key="1">
    <citation type="journal article" date="1994" name="Biol. Reprod.">
        <title>Cloning of decidual prolactin from rhesus macaque.</title>
        <authorList>
            <person name="Brown N.A."/>
            <person name="Bethea C.L."/>
        </authorList>
    </citation>
    <scope>NUCLEOTIDE SEQUENCE [MRNA]</scope>
    <source>
        <tissue>Decidua</tissue>
    </source>
</reference>
<protein>
    <recommendedName>
        <fullName>Prolactin</fullName>
        <shortName>PRL</shortName>
    </recommendedName>
</protein>
<feature type="signal peptide" evidence="1">
    <location>
        <begin position="1"/>
        <end position="28"/>
    </location>
</feature>
<feature type="chain" id="PRO_0000032917" description="Prolactin">
    <location>
        <begin position="29"/>
        <end position="227"/>
    </location>
</feature>
<feature type="modified residue" description="Phosphoserine" evidence="3">
    <location>
        <position position="54"/>
    </location>
</feature>
<feature type="modified residue" description="Phosphoserine" evidence="3">
    <location>
        <position position="62"/>
    </location>
</feature>
<feature type="modified residue" description="Phosphoserine" evidence="3">
    <location>
        <position position="118"/>
    </location>
</feature>
<feature type="glycosylation site" description="N-linked (GlcNAc...) asparagine" evidence="4">
    <location>
        <position position="59"/>
    </location>
</feature>
<feature type="disulfide bond" evidence="1">
    <location>
        <begin position="32"/>
        <end position="39"/>
    </location>
</feature>
<feature type="disulfide bond" evidence="1">
    <location>
        <begin position="86"/>
        <end position="202"/>
    </location>
</feature>
<feature type="disulfide bond" evidence="1">
    <location>
        <begin position="219"/>
        <end position="227"/>
    </location>
</feature>
<gene>
    <name type="primary">PRL</name>
</gene>
<name>PRL_MACMU</name>
<keyword id="KW-1015">Disulfide bond</keyword>
<keyword id="KW-0325">Glycoprotein</keyword>
<keyword id="KW-0372">Hormone</keyword>
<keyword id="KW-0421">Lactation</keyword>
<keyword id="KW-0597">Phosphoprotein</keyword>
<keyword id="KW-1185">Reference proteome</keyword>
<keyword id="KW-0964">Secreted</keyword>
<keyword id="KW-0732">Signal</keyword>
<proteinExistence type="evidence at transcript level"/>
<organism>
    <name type="scientific">Macaca mulatta</name>
    <name type="common">Rhesus macaque</name>
    <dbReference type="NCBI Taxonomy" id="9544"/>
    <lineage>
        <taxon>Eukaryota</taxon>
        <taxon>Metazoa</taxon>
        <taxon>Chordata</taxon>
        <taxon>Craniata</taxon>
        <taxon>Vertebrata</taxon>
        <taxon>Euteleostomi</taxon>
        <taxon>Mammalia</taxon>
        <taxon>Eutheria</taxon>
        <taxon>Euarchontoglires</taxon>
        <taxon>Primates</taxon>
        <taxon>Haplorrhini</taxon>
        <taxon>Catarrhini</taxon>
        <taxon>Cercopithecidae</taxon>
        <taxon>Cercopithecinae</taxon>
        <taxon>Macaca</taxon>
    </lineage>
</organism>
<dbReference type="EMBL" id="U09018">
    <property type="protein sequence ID" value="AAA18471.1"/>
    <property type="molecule type" value="mRNA"/>
</dbReference>
<dbReference type="RefSeq" id="NP_001040593.1">
    <property type="nucleotide sequence ID" value="NM_001047128.3"/>
</dbReference>
<dbReference type="RefSeq" id="XP_014991125.1">
    <property type="nucleotide sequence ID" value="XM_015135639.2"/>
</dbReference>
<dbReference type="BMRB" id="P55151"/>
<dbReference type="SMR" id="P55151"/>
<dbReference type="FunCoup" id="P55151">
    <property type="interactions" value="1027"/>
</dbReference>
<dbReference type="STRING" id="9544.ENSMMUP00000027172"/>
<dbReference type="GlyCosmos" id="P55151">
    <property type="glycosylation" value="1 site, No reported glycans"/>
</dbReference>
<dbReference type="PaxDb" id="9544-ENSMMUP00000027172"/>
<dbReference type="GeneID" id="707052"/>
<dbReference type="KEGG" id="mcc:707052"/>
<dbReference type="CTD" id="5617"/>
<dbReference type="eggNOG" id="ENOG502QYU3">
    <property type="taxonomic scope" value="Eukaryota"/>
</dbReference>
<dbReference type="HOGENOM" id="CLU_088274_0_1_1"/>
<dbReference type="InParanoid" id="P55151"/>
<dbReference type="OrthoDB" id="9946219at2759"/>
<dbReference type="TreeFam" id="TF332592"/>
<dbReference type="Proteomes" id="UP000006718">
    <property type="component" value="Unassembled WGS sequence"/>
</dbReference>
<dbReference type="GO" id="GO:0005615">
    <property type="term" value="C:extracellular space"/>
    <property type="evidence" value="ECO:0000318"/>
    <property type="project" value="GO_Central"/>
</dbReference>
<dbReference type="GO" id="GO:0005179">
    <property type="term" value="F:hormone activity"/>
    <property type="evidence" value="ECO:0000318"/>
    <property type="project" value="GO_Central"/>
</dbReference>
<dbReference type="GO" id="GO:0005148">
    <property type="term" value="F:prolactin receptor binding"/>
    <property type="evidence" value="ECO:0000318"/>
    <property type="project" value="GO_Central"/>
</dbReference>
<dbReference type="GO" id="GO:0007166">
    <property type="term" value="P:cell surface receptor signaling pathway"/>
    <property type="evidence" value="ECO:0000318"/>
    <property type="project" value="GO_Central"/>
</dbReference>
<dbReference type="GO" id="GO:0007565">
    <property type="term" value="P:female pregnancy"/>
    <property type="evidence" value="ECO:0000318"/>
    <property type="project" value="GO_Central"/>
</dbReference>
<dbReference type="GO" id="GO:0007595">
    <property type="term" value="P:lactation"/>
    <property type="evidence" value="ECO:0007669"/>
    <property type="project" value="UniProtKB-KW"/>
</dbReference>
<dbReference type="GO" id="GO:0030879">
    <property type="term" value="P:mammary gland development"/>
    <property type="evidence" value="ECO:0000318"/>
    <property type="project" value="GO_Central"/>
</dbReference>
<dbReference type="GO" id="GO:1903489">
    <property type="term" value="P:positive regulation of lactation"/>
    <property type="evidence" value="ECO:0000318"/>
    <property type="project" value="GO_Central"/>
</dbReference>
<dbReference type="GO" id="GO:0046427">
    <property type="term" value="P:positive regulation of receptor signaling pathway via JAK-STAT"/>
    <property type="evidence" value="ECO:0000318"/>
    <property type="project" value="GO_Central"/>
</dbReference>
<dbReference type="GO" id="GO:0031667">
    <property type="term" value="P:response to nutrient levels"/>
    <property type="evidence" value="ECO:0000318"/>
    <property type="project" value="GO_Central"/>
</dbReference>
<dbReference type="CDD" id="cd10288">
    <property type="entry name" value="prolactin_like"/>
    <property type="match status" value="1"/>
</dbReference>
<dbReference type="FunFam" id="1.20.1250.10:FF:000003">
    <property type="entry name" value="Prolactin"/>
    <property type="match status" value="1"/>
</dbReference>
<dbReference type="Gene3D" id="1.20.1250.10">
    <property type="match status" value="1"/>
</dbReference>
<dbReference type="InterPro" id="IPR009079">
    <property type="entry name" value="4_helix_cytokine-like_core"/>
</dbReference>
<dbReference type="InterPro" id="IPR001400">
    <property type="entry name" value="Somatotropin/Prolactin"/>
</dbReference>
<dbReference type="InterPro" id="IPR018116">
    <property type="entry name" value="Somatotropin_CS"/>
</dbReference>
<dbReference type="PANTHER" id="PTHR11417:SF5">
    <property type="entry name" value="PROLACTIN"/>
    <property type="match status" value="1"/>
</dbReference>
<dbReference type="PANTHER" id="PTHR11417">
    <property type="entry name" value="SOMATOTROPIN,PROLACTIN"/>
    <property type="match status" value="1"/>
</dbReference>
<dbReference type="Pfam" id="PF00103">
    <property type="entry name" value="Hormone_1"/>
    <property type="match status" value="1"/>
</dbReference>
<dbReference type="PRINTS" id="PR00836">
    <property type="entry name" value="SOMATOTROPIN"/>
</dbReference>
<dbReference type="SUPFAM" id="SSF47266">
    <property type="entry name" value="4-helical cytokines"/>
    <property type="match status" value="1"/>
</dbReference>
<dbReference type="PROSITE" id="PS00266">
    <property type="entry name" value="SOMATOTROPIN_1"/>
    <property type="match status" value="1"/>
</dbReference>
<dbReference type="PROSITE" id="PS00338">
    <property type="entry name" value="SOMATOTROPIN_2"/>
    <property type="match status" value="1"/>
</dbReference>
<comment type="function">
    <text>Prolactin acts primarily on the mammary gland by promoting lactation.</text>
</comment>
<comment type="subunit">
    <text evidence="2">Interacts with PRLR.</text>
</comment>
<comment type="subcellular location">
    <subcellularLocation>
        <location>Secreted</location>
    </subcellularLocation>
</comment>
<comment type="similarity">
    <text evidence="5">Belongs to the somatotropin/prolactin family.</text>
</comment>